<feature type="chain" id="PRO_1000058825" description="Adenylate kinase">
    <location>
        <begin position="1"/>
        <end position="214"/>
    </location>
</feature>
<feature type="region of interest" description="NMP" evidence="1">
    <location>
        <begin position="30"/>
        <end position="59"/>
    </location>
</feature>
<feature type="region of interest" description="LID">
    <location>
        <begin position="122"/>
        <end position="159"/>
    </location>
</feature>
<feature type="binding site" evidence="1">
    <location>
        <begin position="10"/>
        <end position="15"/>
    </location>
    <ligand>
        <name>ATP</name>
        <dbReference type="ChEBI" id="CHEBI:30616"/>
    </ligand>
</feature>
<feature type="binding site" evidence="1">
    <location>
        <position position="31"/>
    </location>
    <ligand>
        <name>AMP</name>
        <dbReference type="ChEBI" id="CHEBI:456215"/>
    </ligand>
</feature>
<feature type="binding site" evidence="1">
    <location>
        <position position="36"/>
    </location>
    <ligand>
        <name>AMP</name>
        <dbReference type="ChEBI" id="CHEBI:456215"/>
    </ligand>
</feature>
<feature type="binding site" evidence="1">
    <location>
        <begin position="57"/>
        <end position="59"/>
    </location>
    <ligand>
        <name>AMP</name>
        <dbReference type="ChEBI" id="CHEBI:456215"/>
    </ligand>
</feature>
<feature type="binding site" evidence="1">
    <location>
        <begin position="85"/>
        <end position="88"/>
    </location>
    <ligand>
        <name>AMP</name>
        <dbReference type="ChEBI" id="CHEBI:456215"/>
    </ligand>
</feature>
<feature type="binding site" evidence="1">
    <location>
        <position position="92"/>
    </location>
    <ligand>
        <name>AMP</name>
        <dbReference type="ChEBI" id="CHEBI:456215"/>
    </ligand>
</feature>
<feature type="binding site" evidence="1">
    <location>
        <position position="123"/>
    </location>
    <ligand>
        <name>ATP</name>
        <dbReference type="ChEBI" id="CHEBI:30616"/>
    </ligand>
</feature>
<feature type="binding site" evidence="1">
    <location>
        <begin position="132"/>
        <end position="133"/>
    </location>
    <ligand>
        <name>ATP</name>
        <dbReference type="ChEBI" id="CHEBI:30616"/>
    </ligand>
</feature>
<feature type="binding site" evidence="1">
    <location>
        <position position="156"/>
    </location>
    <ligand>
        <name>AMP</name>
        <dbReference type="ChEBI" id="CHEBI:456215"/>
    </ligand>
</feature>
<feature type="binding site" evidence="1">
    <location>
        <position position="167"/>
    </location>
    <ligand>
        <name>AMP</name>
        <dbReference type="ChEBI" id="CHEBI:456215"/>
    </ligand>
</feature>
<feature type="binding site" evidence="1">
    <location>
        <position position="200"/>
    </location>
    <ligand>
        <name>ATP</name>
        <dbReference type="ChEBI" id="CHEBI:30616"/>
    </ligand>
</feature>
<sequence length="214" mass="23587">MRIILLGAPGAGKGTQAQFIMEKYGIPQISTGDMLRAAVKSGSELGKKAKDIMDAGKLVTDELVIALVKERITQEDCRNGFLLDGFPRTIPQADAMKEAGINVDYVLEFAVPDELIVDRIIGRRVHAASGRVYHIKFNPPKVEGKDDVTGEELTTRKDDQEETVRKRLVEYHQMTAPLIGYYSKEAQAGNTQYAKVDGTKPVAEVRAELEKILG</sequence>
<dbReference type="EC" id="2.7.4.3" evidence="1"/>
<dbReference type="EMBL" id="CP000653">
    <property type="protein sequence ID" value="ABP59638.1"/>
    <property type="molecule type" value="Genomic_DNA"/>
</dbReference>
<dbReference type="RefSeq" id="WP_012016358.1">
    <property type="nucleotide sequence ID" value="NC_009436.1"/>
</dbReference>
<dbReference type="SMR" id="A4W7F8"/>
<dbReference type="STRING" id="399742.Ent638_0954"/>
<dbReference type="KEGG" id="ent:Ent638_0954"/>
<dbReference type="eggNOG" id="COG0563">
    <property type="taxonomic scope" value="Bacteria"/>
</dbReference>
<dbReference type="HOGENOM" id="CLU_032354_1_2_6"/>
<dbReference type="OrthoDB" id="9805030at2"/>
<dbReference type="UniPathway" id="UPA00588">
    <property type="reaction ID" value="UER00649"/>
</dbReference>
<dbReference type="Proteomes" id="UP000000230">
    <property type="component" value="Chromosome"/>
</dbReference>
<dbReference type="GO" id="GO:0005737">
    <property type="term" value="C:cytoplasm"/>
    <property type="evidence" value="ECO:0007669"/>
    <property type="project" value="UniProtKB-SubCell"/>
</dbReference>
<dbReference type="GO" id="GO:0004017">
    <property type="term" value="F:adenylate kinase activity"/>
    <property type="evidence" value="ECO:0007669"/>
    <property type="project" value="UniProtKB-UniRule"/>
</dbReference>
<dbReference type="GO" id="GO:0005524">
    <property type="term" value="F:ATP binding"/>
    <property type="evidence" value="ECO:0007669"/>
    <property type="project" value="UniProtKB-UniRule"/>
</dbReference>
<dbReference type="GO" id="GO:0044209">
    <property type="term" value="P:AMP salvage"/>
    <property type="evidence" value="ECO:0007669"/>
    <property type="project" value="UniProtKB-UniRule"/>
</dbReference>
<dbReference type="CDD" id="cd01428">
    <property type="entry name" value="ADK"/>
    <property type="match status" value="1"/>
</dbReference>
<dbReference type="FunFam" id="3.40.50.300:FF:000106">
    <property type="entry name" value="Adenylate kinase mitochondrial"/>
    <property type="match status" value="1"/>
</dbReference>
<dbReference type="Gene3D" id="3.40.50.300">
    <property type="entry name" value="P-loop containing nucleotide triphosphate hydrolases"/>
    <property type="match status" value="1"/>
</dbReference>
<dbReference type="HAMAP" id="MF_00235">
    <property type="entry name" value="Adenylate_kinase_Adk"/>
    <property type="match status" value="1"/>
</dbReference>
<dbReference type="InterPro" id="IPR006259">
    <property type="entry name" value="Adenyl_kin_sub"/>
</dbReference>
<dbReference type="InterPro" id="IPR000850">
    <property type="entry name" value="Adenylat/UMP-CMP_kin"/>
</dbReference>
<dbReference type="InterPro" id="IPR033690">
    <property type="entry name" value="Adenylat_kinase_CS"/>
</dbReference>
<dbReference type="InterPro" id="IPR007862">
    <property type="entry name" value="Adenylate_kinase_lid-dom"/>
</dbReference>
<dbReference type="InterPro" id="IPR027417">
    <property type="entry name" value="P-loop_NTPase"/>
</dbReference>
<dbReference type="NCBIfam" id="TIGR01351">
    <property type="entry name" value="adk"/>
    <property type="match status" value="1"/>
</dbReference>
<dbReference type="NCBIfam" id="NF001379">
    <property type="entry name" value="PRK00279.1-1"/>
    <property type="match status" value="1"/>
</dbReference>
<dbReference type="NCBIfam" id="NF001380">
    <property type="entry name" value="PRK00279.1-2"/>
    <property type="match status" value="1"/>
</dbReference>
<dbReference type="NCBIfam" id="NF001381">
    <property type="entry name" value="PRK00279.1-3"/>
    <property type="match status" value="1"/>
</dbReference>
<dbReference type="NCBIfam" id="NF011100">
    <property type="entry name" value="PRK14527.1"/>
    <property type="match status" value="1"/>
</dbReference>
<dbReference type="PANTHER" id="PTHR23359">
    <property type="entry name" value="NUCLEOTIDE KINASE"/>
    <property type="match status" value="1"/>
</dbReference>
<dbReference type="Pfam" id="PF00406">
    <property type="entry name" value="ADK"/>
    <property type="match status" value="1"/>
</dbReference>
<dbReference type="Pfam" id="PF05191">
    <property type="entry name" value="ADK_lid"/>
    <property type="match status" value="1"/>
</dbReference>
<dbReference type="PRINTS" id="PR00094">
    <property type="entry name" value="ADENYLTKNASE"/>
</dbReference>
<dbReference type="SUPFAM" id="SSF52540">
    <property type="entry name" value="P-loop containing nucleoside triphosphate hydrolases"/>
    <property type="match status" value="1"/>
</dbReference>
<dbReference type="PROSITE" id="PS00113">
    <property type="entry name" value="ADENYLATE_KINASE"/>
    <property type="match status" value="1"/>
</dbReference>
<protein>
    <recommendedName>
        <fullName evidence="1">Adenylate kinase</fullName>
        <shortName evidence="1">AK</shortName>
        <ecNumber evidence="1">2.7.4.3</ecNumber>
    </recommendedName>
    <alternativeName>
        <fullName evidence="1">ATP-AMP transphosphorylase</fullName>
    </alternativeName>
    <alternativeName>
        <fullName evidence="1">ATP:AMP phosphotransferase</fullName>
    </alternativeName>
    <alternativeName>
        <fullName evidence="1">Adenylate monophosphate kinase</fullName>
    </alternativeName>
</protein>
<proteinExistence type="inferred from homology"/>
<accession>A4W7F8</accession>
<reference key="1">
    <citation type="journal article" date="2010" name="PLoS Genet.">
        <title>Genome sequence of the plant growth promoting endophytic bacterium Enterobacter sp. 638.</title>
        <authorList>
            <person name="Taghavi S."/>
            <person name="van der Lelie D."/>
            <person name="Hoffman A."/>
            <person name="Zhang Y.B."/>
            <person name="Walla M.D."/>
            <person name="Vangronsveld J."/>
            <person name="Newman L."/>
            <person name="Monchy S."/>
        </authorList>
    </citation>
    <scope>NUCLEOTIDE SEQUENCE [LARGE SCALE GENOMIC DNA]</scope>
    <source>
        <strain>638</strain>
    </source>
</reference>
<organism>
    <name type="scientific">Enterobacter sp. (strain 638)</name>
    <dbReference type="NCBI Taxonomy" id="399742"/>
    <lineage>
        <taxon>Bacteria</taxon>
        <taxon>Pseudomonadati</taxon>
        <taxon>Pseudomonadota</taxon>
        <taxon>Gammaproteobacteria</taxon>
        <taxon>Enterobacterales</taxon>
        <taxon>Enterobacteriaceae</taxon>
        <taxon>Enterobacter</taxon>
    </lineage>
</organism>
<name>KAD_ENT38</name>
<comment type="function">
    <text evidence="1">Catalyzes the reversible transfer of the terminal phosphate group between ATP and AMP. Plays an important role in cellular energy homeostasis and in adenine nucleotide metabolism.</text>
</comment>
<comment type="catalytic activity">
    <reaction evidence="1">
        <text>AMP + ATP = 2 ADP</text>
        <dbReference type="Rhea" id="RHEA:12973"/>
        <dbReference type="ChEBI" id="CHEBI:30616"/>
        <dbReference type="ChEBI" id="CHEBI:456215"/>
        <dbReference type="ChEBI" id="CHEBI:456216"/>
        <dbReference type="EC" id="2.7.4.3"/>
    </reaction>
</comment>
<comment type="pathway">
    <text evidence="1">Purine metabolism; AMP biosynthesis via salvage pathway; AMP from ADP: step 1/1.</text>
</comment>
<comment type="subunit">
    <text evidence="1">Monomer.</text>
</comment>
<comment type="subcellular location">
    <subcellularLocation>
        <location evidence="1">Cytoplasm</location>
    </subcellularLocation>
</comment>
<comment type="domain">
    <text evidence="1">Consists of three domains, a large central CORE domain and two small peripheral domains, NMPbind and LID, which undergo movements during catalysis. The LID domain closes over the site of phosphoryl transfer upon ATP binding. Assembling and dissambling the active center during each catalytic cycle provides an effective means to prevent ATP hydrolysis.</text>
</comment>
<comment type="similarity">
    <text evidence="1">Belongs to the adenylate kinase family.</text>
</comment>
<keyword id="KW-0067">ATP-binding</keyword>
<keyword id="KW-0963">Cytoplasm</keyword>
<keyword id="KW-0418">Kinase</keyword>
<keyword id="KW-0545">Nucleotide biosynthesis</keyword>
<keyword id="KW-0547">Nucleotide-binding</keyword>
<keyword id="KW-0808">Transferase</keyword>
<gene>
    <name evidence="1" type="primary">adk</name>
    <name type="ordered locus">Ent638_0954</name>
</gene>
<evidence type="ECO:0000255" key="1">
    <source>
        <dbReference type="HAMAP-Rule" id="MF_00235"/>
    </source>
</evidence>